<organism>
    <name type="scientific">Aspergillus niger (strain ATCC MYA-4892 / CBS 513.88 / FGSC A1513)</name>
    <dbReference type="NCBI Taxonomy" id="425011"/>
    <lineage>
        <taxon>Eukaryota</taxon>
        <taxon>Fungi</taxon>
        <taxon>Dikarya</taxon>
        <taxon>Ascomycota</taxon>
        <taxon>Pezizomycotina</taxon>
        <taxon>Eurotiomycetes</taxon>
        <taxon>Eurotiomycetidae</taxon>
        <taxon>Eurotiales</taxon>
        <taxon>Aspergillaceae</taxon>
        <taxon>Aspergillus</taxon>
        <taxon>Aspergillus subgen. Circumdati</taxon>
    </lineage>
</organism>
<dbReference type="EC" id="1.14.19.-" evidence="1"/>
<dbReference type="EMBL" id="AM270352">
    <property type="protein sequence ID" value="CAK42675.1"/>
    <property type="molecule type" value="Genomic_DNA"/>
</dbReference>
<dbReference type="SMR" id="A2R6G7"/>
<dbReference type="EnsemblFungi" id="CAK42675">
    <property type="protein sequence ID" value="CAK42675"/>
    <property type="gene ID" value="An15g07880"/>
</dbReference>
<dbReference type="VEuPathDB" id="FungiDB:An15g07880"/>
<dbReference type="HOGENOM" id="CLU_024648_4_2_1"/>
<dbReference type="Proteomes" id="UP000006706">
    <property type="component" value="Chromosome 3R"/>
</dbReference>
<dbReference type="GO" id="GO:0003824">
    <property type="term" value="F:catalytic activity"/>
    <property type="evidence" value="ECO:0000304"/>
    <property type="project" value="UniProt"/>
</dbReference>
<dbReference type="GO" id="GO:0071949">
    <property type="term" value="F:FAD binding"/>
    <property type="evidence" value="ECO:0007669"/>
    <property type="project" value="InterPro"/>
</dbReference>
<dbReference type="GO" id="GO:0140907">
    <property type="term" value="F:flavin-dependent halogenase activity"/>
    <property type="evidence" value="ECO:0000250"/>
    <property type="project" value="GO_Central"/>
</dbReference>
<dbReference type="GO" id="GO:0004497">
    <property type="term" value="F:monooxygenase activity"/>
    <property type="evidence" value="ECO:0007669"/>
    <property type="project" value="UniProtKB-KW"/>
</dbReference>
<dbReference type="GO" id="GO:1900818">
    <property type="term" value="P:ochratoxin A biosynthetic process"/>
    <property type="evidence" value="ECO:0000250"/>
    <property type="project" value="GO_Central"/>
</dbReference>
<dbReference type="Gene3D" id="3.50.50.60">
    <property type="entry name" value="FAD/NAD(P)-binding domain"/>
    <property type="match status" value="1"/>
</dbReference>
<dbReference type="InterPro" id="IPR002938">
    <property type="entry name" value="FAD-bd"/>
</dbReference>
<dbReference type="InterPro" id="IPR036188">
    <property type="entry name" value="FAD/NAD-bd_sf"/>
</dbReference>
<dbReference type="InterPro" id="IPR050816">
    <property type="entry name" value="Flavin-dep_Halogenase_NPB"/>
</dbReference>
<dbReference type="InterPro" id="IPR006905">
    <property type="entry name" value="Flavin_halogenase"/>
</dbReference>
<dbReference type="PANTHER" id="PTHR43747:SF5">
    <property type="entry name" value="FAD-BINDING DOMAIN-CONTAINING PROTEIN"/>
    <property type="match status" value="1"/>
</dbReference>
<dbReference type="PANTHER" id="PTHR43747">
    <property type="entry name" value="FAD-BINDING PROTEIN"/>
    <property type="match status" value="1"/>
</dbReference>
<dbReference type="Pfam" id="PF01494">
    <property type="entry name" value="FAD_binding_3"/>
    <property type="match status" value="1"/>
</dbReference>
<dbReference type="Pfam" id="PF04820">
    <property type="entry name" value="Trp_halogenase"/>
    <property type="match status" value="1"/>
</dbReference>
<dbReference type="PRINTS" id="PR00420">
    <property type="entry name" value="RNGMNOXGNASE"/>
</dbReference>
<dbReference type="SUPFAM" id="SSF51905">
    <property type="entry name" value="FAD/NAD(P)-binding domain"/>
    <property type="match status" value="1"/>
</dbReference>
<proteinExistence type="evidence at transcript level"/>
<protein>
    <recommendedName>
        <fullName evidence="8">Flavin-dependent halogenase otaD</fullName>
        <ecNumber evidence="1">1.14.19.-</ecNumber>
    </recommendedName>
    <alternativeName>
        <fullName evidence="7">Ochratoxin biosynthesis cluster protein 5</fullName>
    </alternativeName>
    <alternativeName>
        <fullName evidence="8">Ochratoxin biosynthesis cluster protein D</fullName>
    </alternativeName>
</protein>
<evidence type="ECO:0000250" key="1">
    <source>
        <dbReference type="UniProtKB" id="A0A1R3RGJ2"/>
    </source>
</evidence>
<evidence type="ECO:0000250" key="2">
    <source>
        <dbReference type="UniProtKB" id="P95480"/>
    </source>
</evidence>
<evidence type="ECO:0000269" key="3">
    <source>
    </source>
</evidence>
<evidence type="ECO:0000269" key="4">
    <source>
    </source>
</evidence>
<evidence type="ECO:0000269" key="5">
    <source>
    </source>
</evidence>
<evidence type="ECO:0000269" key="6">
    <source>
    </source>
</evidence>
<evidence type="ECO:0000303" key="7">
    <source>
    </source>
</evidence>
<evidence type="ECO:0000303" key="8">
    <source>
    </source>
</evidence>
<evidence type="ECO:0000305" key="9"/>
<evidence type="ECO:0000305" key="10">
    <source>
    </source>
</evidence>
<evidence type="ECO:0000305" key="11">
    <source>
    </source>
</evidence>
<name>OTAD_ASPNC</name>
<accession>A2R6G7</accession>
<reference key="1">
    <citation type="journal article" date="2007" name="Nat. Biotechnol.">
        <title>Genome sequencing and analysis of the versatile cell factory Aspergillus niger CBS 513.88.</title>
        <authorList>
            <person name="Pel H.J."/>
            <person name="de Winde J.H."/>
            <person name="Archer D.B."/>
            <person name="Dyer P.S."/>
            <person name="Hofmann G."/>
            <person name="Schaap P.J."/>
            <person name="Turner G."/>
            <person name="de Vries R.P."/>
            <person name="Albang R."/>
            <person name="Albermann K."/>
            <person name="Andersen M.R."/>
            <person name="Bendtsen J.D."/>
            <person name="Benen J.A.E."/>
            <person name="van den Berg M."/>
            <person name="Breestraat S."/>
            <person name="Caddick M.X."/>
            <person name="Contreras R."/>
            <person name="Cornell M."/>
            <person name="Coutinho P.M."/>
            <person name="Danchin E.G.J."/>
            <person name="Debets A.J.M."/>
            <person name="Dekker P."/>
            <person name="van Dijck P.W.M."/>
            <person name="van Dijk A."/>
            <person name="Dijkhuizen L."/>
            <person name="Driessen A.J.M."/>
            <person name="d'Enfert C."/>
            <person name="Geysens S."/>
            <person name="Goosen C."/>
            <person name="Groot G.S.P."/>
            <person name="de Groot P.W.J."/>
            <person name="Guillemette T."/>
            <person name="Henrissat B."/>
            <person name="Herweijer M."/>
            <person name="van den Hombergh J.P.T.W."/>
            <person name="van den Hondel C.A.M.J.J."/>
            <person name="van der Heijden R.T.J.M."/>
            <person name="van der Kaaij R.M."/>
            <person name="Klis F.M."/>
            <person name="Kools H.J."/>
            <person name="Kubicek C.P."/>
            <person name="van Kuyk P.A."/>
            <person name="Lauber J."/>
            <person name="Lu X."/>
            <person name="van der Maarel M.J.E.C."/>
            <person name="Meulenberg R."/>
            <person name="Menke H."/>
            <person name="Mortimer M.A."/>
            <person name="Nielsen J."/>
            <person name="Oliver S.G."/>
            <person name="Olsthoorn M."/>
            <person name="Pal K."/>
            <person name="van Peij N.N.M.E."/>
            <person name="Ram A.F.J."/>
            <person name="Rinas U."/>
            <person name="Roubos J.A."/>
            <person name="Sagt C.M.J."/>
            <person name="Schmoll M."/>
            <person name="Sun J."/>
            <person name="Ussery D."/>
            <person name="Varga J."/>
            <person name="Vervecken W."/>
            <person name="van de Vondervoort P.J.J."/>
            <person name="Wedler H."/>
            <person name="Woesten H.A.B."/>
            <person name="Zeng A.-P."/>
            <person name="van Ooyen A.J.J."/>
            <person name="Visser J."/>
            <person name="Stam H."/>
        </authorList>
    </citation>
    <scope>NUCLEOTIDE SEQUENCE [LARGE SCALE GENOMIC DNA]</scope>
    <source>
        <strain>ATCC MYA-4892 / CBS 513.88 / FGSC A1513</strain>
    </source>
</reference>
<reference key="2">
    <citation type="journal article" date="2012" name="Int. J. Food Microbiol.">
        <title>Strain-specific polyketide synthase genes of Aspergillus niger.</title>
        <authorList>
            <person name="Ferracin L.M."/>
            <person name="Fier C.B."/>
            <person name="Vieira M.L."/>
            <person name="Monteiro-Vitorello C.B."/>
            <person name="Varani A.M."/>
            <person name="Rossi M.M."/>
            <person name="Mueller-Santos M."/>
            <person name="Taniwaki M.H."/>
            <person name="Thie Iamanaka B."/>
            <person name="Fungaro M.H."/>
        </authorList>
    </citation>
    <scope>IDENTIFICATION</scope>
</reference>
<reference key="3">
    <citation type="journal article" date="2016" name="Front. Microbiol.">
        <title>Variation in fumonisin and ochratoxin production associated with differences in biosynthetic gene content in Aspergillus niger and A. welwitschiae isolates from multiple crop and geographic origins.</title>
        <authorList>
            <person name="Susca A."/>
            <person name="Proctor R.H."/>
            <person name="Morelli M."/>
            <person name="Haidukowski M."/>
            <person name="Gallo A."/>
            <person name="Logrieco A.F."/>
            <person name="Moretti A."/>
        </authorList>
    </citation>
    <scope>FUNCTION</scope>
</reference>
<reference key="4">
    <citation type="journal article" date="2020" name="Front. Microbiol.">
        <title>Comparative genomic analysis of ochratoxin A biosynthetic cluster in producing fungi: new evidence of a cyclase gene involvement.</title>
        <authorList>
            <person name="Ferrara M."/>
            <person name="Gallo A."/>
            <person name="Perrone G."/>
            <person name="Magista D."/>
            <person name="Baker S.E."/>
        </authorList>
    </citation>
    <scope>NOMENCLATURE</scope>
    <scope>FUNCTION</scope>
</reference>
<reference key="5">
    <citation type="journal article" date="2022" name="J. Agric. Food Chem.">
        <title>Deletion and overexpression of the AnOTAbzip gene, a positive regulator of ochratoxin A biosynthesis in Aspergillus niger.</title>
        <authorList>
            <person name="Zhang J."/>
            <person name="Li L."/>
            <person name="Yang Y."/>
            <person name="Zhao C."/>
            <person name="Hu J."/>
            <person name="Xue X."/>
            <person name="Gao Q."/>
            <person name="Wang D."/>
            <person name="Zhuang Z."/>
            <person name="Zhang Y."/>
        </authorList>
    </citation>
    <scope>INDUCTION</scope>
</reference>
<reference key="6">
    <citation type="journal article" date="2022" name="Toxins">
        <title>Insights into the Underlying Mechanism of Ochratoxin A Production in Aspergillus niger CBS 513.88 Using Different Carbon Sources.</title>
        <authorList>
            <person name="Wei S."/>
            <person name="Hu C."/>
            <person name="Nie P."/>
            <person name="Zhai H."/>
            <person name="Zhang S."/>
            <person name="Li N."/>
            <person name="Lv Y."/>
            <person name="Hu Y."/>
        </authorList>
    </citation>
    <scope>INDUCTION</scope>
</reference>
<gene>
    <name evidence="8" type="primary">otaD</name>
    <name evidence="7" type="synonym">ota5</name>
    <name type="ORF">An15g07880</name>
</gene>
<sequence>MEIPHKATVLVIGGGPGGSYTASALAREGIDIVLLEADVFPRFIDLDETFVNYGFVRKNASHGSLADTDFILQPGADTFAWNVVRSECDDLMFKHASNSGARAFDGVKVTAIEFDPLDESAIDDHPGRPVSASWKAKDGRTGSISFDYLVDASGRAGIASTKYLKSRTYNSYLKNVASWGYWRGATPYGVGTSVEGQPYFEALQDGSGWVWFIPLHNGTTSVGVVMNQELATQKKKSSTVTSSRAFYLESVEGARVISQLLQPANLDGEIKQASDWSYNASSYGSPYLRIVGDAGAFIDPYFSSGVHLAVSGGLSAAVSIAASIRGDCPEHTAWQWHSQGVANRYGRFLLVVLGATKQIRARDSPVLNSEGQDGFDDAFAVIRPVIQGTADVQGKVSAREVLDAVTFSTNAVRPSAGGQNVVLEESSRSLRSQVEQEMGDVANSLAKAYKDTDVYEGLMARLERGSLGLKAVGVMG</sequence>
<keyword id="KW-0274">FAD</keyword>
<keyword id="KW-0285">Flavoprotein</keyword>
<keyword id="KW-0503">Monooxygenase</keyword>
<keyword id="KW-0560">Oxidoreductase</keyword>
<keyword id="KW-1185">Reference proteome</keyword>
<feature type="chain" id="PRO_0000440595" description="Flavin-dependent halogenase otaD">
    <location>
        <begin position="1"/>
        <end position="476"/>
    </location>
</feature>
<feature type="binding site" evidence="2">
    <location>
        <position position="14"/>
    </location>
    <ligand>
        <name>FAD</name>
        <dbReference type="ChEBI" id="CHEBI:57692"/>
    </ligand>
</feature>
<feature type="binding site" evidence="2">
    <location>
        <position position="17"/>
    </location>
    <ligand>
        <name>FAD</name>
        <dbReference type="ChEBI" id="CHEBI:57692"/>
    </ligand>
</feature>
<feature type="binding site" evidence="2">
    <location>
        <position position="304"/>
    </location>
    <ligand>
        <name>chloride</name>
        <dbReference type="ChEBI" id="CHEBI:17996"/>
    </ligand>
</feature>
<feature type="binding site" evidence="2">
    <location>
        <position position="305"/>
    </location>
    <ligand>
        <name>chloride</name>
        <dbReference type="ChEBI" id="CHEBI:17996"/>
    </ligand>
</feature>
<feature type="binding site" evidence="2">
    <location>
        <position position="306"/>
    </location>
    <ligand>
        <name>FAD</name>
        <dbReference type="ChEBI" id="CHEBI:57692"/>
    </ligand>
</feature>
<comment type="function">
    <text evidence="1 3 4 10 11">Flavin-dependent halogenase; part of the gene cluster that mediates the biosynthesis of ochratoxin A (OTA), a mycotoxin composed of a chlorinated type I polyketide dihydroisocoumarin moiety linked to L-phenylalanine, and demonstrated to have nephrotoxic, immunotoxic, genotoxic, neurotoxic, and teratogenic properties (PubMed:27667988, PubMed:33391201). OtaD chlorinates ochratoxin B (OTB) at the C-5 position to form OTA (By similarity). The pathway begins with the highly reducing polyketide synthase otaA that catalyzes the formation of the isocoumarin group during the initial stages of biosynthesis, starting from one acetate and 4 malonate units, to originate the characteristic pentaketide skeleton 7-methylmellein (7-MM) of the OTA molecule. The newly identified cyclase otaY might be involved in the polyketide cyclization reaction during the initial steps of the OTA biosynthesis. 7-MM is then oxidized into 7-carboxymellein (also called ochratoxin beta) by the cytochrome P450 monooxygenase otaC. The NRPS encoded by the otaB gene is involved in the linking of phenylalanine to the dihydroisocoumarin ring. The reaction catalyzed by NRPS results in the production of ochratoxin B (OTB), which is the non-chlorinated analog of OTA and which subsequently serves as the substrate of the halogenase otaD for chlorination activity to form the final molecular structure of OTA, containing a chlorine atom in the C-5 position of the molecule (Probable) (PubMed:27667988, PubMed:33391201).</text>
</comment>
<comment type="catalytic activity">
    <reaction evidence="1">
        <text>ochratoxin B + FADH2 + chloride + O2 = ochratoxin A + FAD + 2 H2O</text>
        <dbReference type="Rhea" id="RHEA:72779"/>
        <dbReference type="ChEBI" id="CHEBI:15377"/>
        <dbReference type="ChEBI" id="CHEBI:15379"/>
        <dbReference type="ChEBI" id="CHEBI:17996"/>
        <dbReference type="ChEBI" id="CHEBI:57692"/>
        <dbReference type="ChEBI" id="CHEBI:58307"/>
        <dbReference type="ChEBI" id="CHEBI:166829"/>
        <dbReference type="ChEBI" id="CHEBI:192526"/>
    </reaction>
    <physiologicalReaction direction="left-to-right" evidence="1">
        <dbReference type="Rhea" id="RHEA:72780"/>
    </physiologicalReaction>
</comment>
<comment type="pathway">
    <text evidence="1">Mycotoxin biosynthesis.</text>
</comment>
<comment type="induction">
    <text evidence="5 6">Expression is positively regulated by the ochratoxin cluster transcription factor otaR1, probably via its binding to the conserved 5'-ACGT-3' bZIP binding motifs found in multiple copies (3 to 4) in the promoters of the OTA biosynthetic genes (PubMed:35143724). Expression is induced by sucrose, glucose and arabinose which repress the gal4 transcription factor, a negative regulator of the ochratoxin gene cluster (PubMed:36006213).</text>
</comment>
<comment type="similarity">
    <text evidence="9">Belongs to the flavin-dependent halogenase family.</text>
</comment>